<name>SYK_STAA1</name>
<accession>A7WYS8</accession>
<dbReference type="EC" id="6.1.1.6" evidence="1"/>
<dbReference type="EMBL" id="AP009324">
    <property type="protein sequence ID" value="BAF77397.1"/>
    <property type="molecule type" value="Genomic_DNA"/>
</dbReference>
<dbReference type="RefSeq" id="WP_001288202.1">
    <property type="nucleotide sequence ID" value="NZ_CTYB01000022.1"/>
</dbReference>
<dbReference type="SMR" id="A7WYS8"/>
<dbReference type="GeneID" id="98344832"/>
<dbReference type="KEGG" id="saw:SAHV_0514"/>
<dbReference type="HOGENOM" id="CLU_008255_6_0_9"/>
<dbReference type="GO" id="GO:0005829">
    <property type="term" value="C:cytosol"/>
    <property type="evidence" value="ECO:0007669"/>
    <property type="project" value="TreeGrafter"/>
</dbReference>
<dbReference type="GO" id="GO:0005524">
    <property type="term" value="F:ATP binding"/>
    <property type="evidence" value="ECO:0007669"/>
    <property type="project" value="UniProtKB-UniRule"/>
</dbReference>
<dbReference type="GO" id="GO:0140096">
    <property type="term" value="F:catalytic activity, acting on a protein"/>
    <property type="evidence" value="ECO:0007669"/>
    <property type="project" value="UniProtKB-ARBA"/>
</dbReference>
<dbReference type="GO" id="GO:0004824">
    <property type="term" value="F:lysine-tRNA ligase activity"/>
    <property type="evidence" value="ECO:0007669"/>
    <property type="project" value="UniProtKB-UniRule"/>
</dbReference>
<dbReference type="GO" id="GO:0000287">
    <property type="term" value="F:magnesium ion binding"/>
    <property type="evidence" value="ECO:0007669"/>
    <property type="project" value="UniProtKB-UniRule"/>
</dbReference>
<dbReference type="GO" id="GO:0016740">
    <property type="term" value="F:transferase activity"/>
    <property type="evidence" value="ECO:0007669"/>
    <property type="project" value="UniProtKB-ARBA"/>
</dbReference>
<dbReference type="GO" id="GO:0000049">
    <property type="term" value="F:tRNA binding"/>
    <property type="evidence" value="ECO:0007669"/>
    <property type="project" value="TreeGrafter"/>
</dbReference>
<dbReference type="GO" id="GO:0006430">
    <property type="term" value="P:lysyl-tRNA aminoacylation"/>
    <property type="evidence" value="ECO:0007669"/>
    <property type="project" value="UniProtKB-UniRule"/>
</dbReference>
<dbReference type="CDD" id="cd00775">
    <property type="entry name" value="LysRS_core"/>
    <property type="match status" value="1"/>
</dbReference>
<dbReference type="CDD" id="cd04322">
    <property type="entry name" value="LysRS_N"/>
    <property type="match status" value="1"/>
</dbReference>
<dbReference type="FunFam" id="2.40.50.140:FF:000024">
    <property type="entry name" value="Lysine--tRNA ligase"/>
    <property type="match status" value="1"/>
</dbReference>
<dbReference type="FunFam" id="3.30.930.10:FF:000001">
    <property type="entry name" value="Lysine--tRNA ligase"/>
    <property type="match status" value="1"/>
</dbReference>
<dbReference type="Gene3D" id="3.30.930.10">
    <property type="entry name" value="Bira Bifunctional Protein, Domain 2"/>
    <property type="match status" value="1"/>
</dbReference>
<dbReference type="Gene3D" id="2.40.50.140">
    <property type="entry name" value="Nucleic acid-binding proteins"/>
    <property type="match status" value="1"/>
</dbReference>
<dbReference type="HAMAP" id="MF_00252">
    <property type="entry name" value="Lys_tRNA_synth_class2"/>
    <property type="match status" value="1"/>
</dbReference>
<dbReference type="InterPro" id="IPR004364">
    <property type="entry name" value="Aa-tRNA-synt_II"/>
</dbReference>
<dbReference type="InterPro" id="IPR006195">
    <property type="entry name" value="aa-tRNA-synth_II"/>
</dbReference>
<dbReference type="InterPro" id="IPR045864">
    <property type="entry name" value="aa-tRNA-synth_II/BPL/LPL"/>
</dbReference>
<dbReference type="InterPro" id="IPR002313">
    <property type="entry name" value="Lys-tRNA-ligase_II"/>
</dbReference>
<dbReference type="InterPro" id="IPR034762">
    <property type="entry name" value="Lys-tRNA-ligase_II_bac/euk"/>
</dbReference>
<dbReference type="InterPro" id="IPR044136">
    <property type="entry name" value="Lys-tRNA-ligase_II_N"/>
</dbReference>
<dbReference type="InterPro" id="IPR018149">
    <property type="entry name" value="Lys-tRNA-synth_II_C"/>
</dbReference>
<dbReference type="InterPro" id="IPR012340">
    <property type="entry name" value="NA-bd_OB-fold"/>
</dbReference>
<dbReference type="InterPro" id="IPR004365">
    <property type="entry name" value="NA-bd_OB_tRNA"/>
</dbReference>
<dbReference type="NCBIfam" id="TIGR00499">
    <property type="entry name" value="lysS_bact"/>
    <property type="match status" value="1"/>
</dbReference>
<dbReference type="NCBIfam" id="NF001756">
    <property type="entry name" value="PRK00484.1"/>
    <property type="match status" value="1"/>
</dbReference>
<dbReference type="PANTHER" id="PTHR42918:SF15">
    <property type="entry name" value="LYSINE--TRNA LIGASE, CHLOROPLASTIC_MITOCHONDRIAL"/>
    <property type="match status" value="1"/>
</dbReference>
<dbReference type="PANTHER" id="PTHR42918">
    <property type="entry name" value="LYSYL-TRNA SYNTHETASE"/>
    <property type="match status" value="1"/>
</dbReference>
<dbReference type="Pfam" id="PF00152">
    <property type="entry name" value="tRNA-synt_2"/>
    <property type="match status" value="1"/>
</dbReference>
<dbReference type="Pfam" id="PF01336">
    <property type="entry name" value="tRNA_anti-codon"/>
    <property type="match status" value="1"/>
</dbReference>
<dbReference type="PIRSF" id="PIRSF039101">
    <property type="entry name" value="LysRS2"/>
    <property type="match status" value="1"/>
</dbReference>
<dbReference type="PRINTS" id="PR00982">
    <property type="entry name" value="TRNASYNTHLYS"/>
</dbReference>
<dbReference type="SUPFAM" id="SSF55681">
    <property type="entry name" value="Class II aaRS and biotin synthetases"/>
    <property type="match status" value="1"/>
</dbReference>
<dbReference type="SUPFAM" id="SSF50249">
    <property type="entry name" value="Nucleic acid-binding proteins"/>
    <property type="match status" value="1"/>
</dbReference>
<dbReference type="PROSITE" id="PS50862">
    <property type="entry name" value="AA_TRNA_LIGASE_II"/>
    <property type="match status" value="1"/>
</dbReference>
<proteinExistence type="inferred from homology"/>
<comment type="catalytic activity">
    <reaction evidence="1">
        <text>tRNA(Lys) + L-lysine + ATP = L-lysyl-tRNA(Lys) + AMP + diphosphate</text>
        <dbReference type="Rhea" id="RHEA:20792"/>
        <dbReference type="Rhea" id="RHEA-COMP:9696"/>
        <dbReference type="Rhea" id="RHEA-COMP:9697"/>
        <dbReference type="ChEBI" id="CHEBI:30616"/>
        <dbReference type="ChEBI" id="CHEBI:32551"/>
        <dbReference type="ChEBI" id="CHEBI:33019"/>
        <dbReference type="ChEBI" id="CHEBI:78442"/>
        <dbReference type="ChEBI" id="CHEBI:78529"/>
        <dbReference type="ChEBI" id="CHEBI:456215"/>
        <dbReference type="EC" id="6.1.1.6"/>
    </reaction>
</comment>
<comment type="cofactor">
    <cofactor evidence="1">
        <name>Mg(2+)</name>
        <dbReference type="ChEBI" id="CHEBI:18420"/>
    </cofactor>
    <text evidence="1">Binds 3 Mg(2+) ions per subunit.</text>
</comment>
<comment type="subunit">
    <text evidence="1">Homodimer.</text>
</comment>
<comment type="subcellular location">
    <subcellularLocation>
        <location evidence="1">Cytoplasm</location>
    </subcellularLocation>
</comment>
<comment type="similarity">
    <text evidence="1">Belongs to the class-II aminoacyl-tRNA synthetase family.</text>
</comment>
<protein>
    <recommendedName>
        <fullName evidence="1">Lysine--tRNA ligase</fullName>
        <ecNumber evidence="1">6.1.1.6</ecNumber>
    </recommendedName>
    <alternativeName>
        <fullName evidence="1">Lysyl-tRNA synthetase</fullName>
        <shortName evidence="1">LysRS</shortName>
    </alternativeName>
</protein>
<keyword id="KW-0030">Aminoacyl-tRNA synthetase</keyword>
<keyword id="KW-0067">ATP-binding</keyword>
<keyword id="KW-0963">Cytoplasm</keyword>
<keyword id="KW-0436">Ligase</keyword>
<keyword id="KW-0460">Magnesium</keyword>
<keyword id="KW-0479">Metal-binding</keyword>
<keyword id="KW-0547">Nucleotide-binding</keyword>
<keyword id="KW-0648">Protein biosynthesis</keyword>
<reference key="1">
    <citation type="journal article" date="2008" name="Antimicrob. Agents Chemother.">
        <title>Mutated response regulator graR is responsible for phenotypic conversion of Staphylococcus aureus from heterogeneous vancomycin-intermediate resistance to vancomycin-intermediate resistance.</title>
        <authorList>
            <person name="Neoh H.-M."/>
            <person name="Cui L."/>
            <person name="Yuzawa H."/>
            <person name="Takeuchi F."/>
            <person name="Matsuo M."/>
            <person name="Hiramatsu K."/>
        </authorList>
    </citation>
    <scope>NUCLEOTIDE SEQUENCE [LARGE SCALE GENOMIC DNA]</scope>
    <source>
        <strain>Mu3 / ATCC 700698</strain>
    </source>
</reference>
<gene>
    <name evidence="1" type="primary">lysS</name>
    <name type="ordered locus">SAHV_0514</name>
</gene>
<sequence>MSEEMNDQMLVRRQKLQELYDLGIDPFGSKFDRSGLSSDLKEEWDQYSKEELVEKEADSHVAIAGRLMTKRGKGKAGFAHVQDLAGQIQIYVRKDQVGDDEFDLWKNADLGDIVGVEGVMFKTNTGELSVKAKKFTLLTKSLRPLPDKFHGLQDIEQRYRQRYLDLITNEDSTRTFINRSKIIQEMRNYLNNKGFLEVETPMMHQIAGGAAARPFVTHHNALDATLYMRIAIELHLKRLIVGGLEKVYEIGRVFRNEGVSTRHNPEFTMIELYEAYADYHDIMDLTESMVRHIANEVLGSAKVQYNGETIDLESAWTRLHIVDAVKEATGVDFYEVKSDEEAKALAKEHGIEIKDTMKYGHILNEFFEQKVEETLIQPTFIYGHPTEISPLAKKNPEDPRFTDRFELFIVGREHANAFTELNDPIDQKGRFEAQLVEKAQGNDEAHEMDEDYIEALEYGMPPTGGLGIGIDRLVMLLTDSPSIRDVLLFPYMRQK</sequence>
<feature type="chain" id="PRO_1000012939" description="Lysine--tRNA ligase">
    <location>
        <begin position="1"/>
        <end position="495"/>
    </location>
</feature>
<feature type="binding site" evidence="1">
    <location>
        <position position="406"/>
    </location>
    <ligand>
        <name>Mg(2+)</name>
        <dbReference type="ChEBI" id="CHEBI:18420"/>
        <label>1</label>
    </ligand>
</feature>
<feature type="binding site" evidence="1">
    <location>
        <position position="413"/>
    </location>
    <ligand>
        <name>Mg(2+)</name>
        <dbReference type="ChEBI" id="CHEBI:18420"/>
        <label>1</label>
    </ligand>
</feature>
<feature type="binding site" evidence="1">
    <location>
        <position position="413"/>
    </location>
    <ligand>
        <name>Mg(2+)</name>
        <dbReference type="ChEBI" id="CHEBI:18420"/>
        <label>2</label>
    </ligand>
</feature>
<evidence type="ECO:0000255" key="1">
    <source>
        <dbReference type="HAMAP-Rule" id="MF_00252"/>
    </source>
</evidence>
<organism>
    <name type="scientific">Staphylococcus aureus (strain Mu3 / ATCC 700698)</name>
    <dbReference type="NCBI Taxonomy" id="418127"/>
    <lineage>
        <taxon>Bacteria</taxon>
        <taxon>Bacillati</taxon>
        <taxon>Bacillota</taxon>
        <taxon>Bacilli</taxon>
        <taxon>Bacillales</taxon>
        <taxon>Staphylococcaceae</taxon>
        <taxon>Staphylococcus</taxon>
    </lineage>
</organism>